<gene>
    <name evidence="1" type="primary">rimM</name>
    <name type="ordered locus">SAOUHSC_01209</name>
</gene>
<comment type="function">
    <text evidence="1">An accessory protein needed during the final step in the assembly of 30S ribosomal subunit, possibly for assembly of the head region. Essential for efficient processing of 16S rRNA. May be needed both before and after RbfA during the maturation of 16S rRNA. It has affinity for free ribosomal 30S subunits but not for 70S ribosomes.</text>
</comment>
<comment type="subunit">
    <text evidence="1">Binds ribosomal protein uS19.</text>
</comment>
<comment type="subcellular location">
    <subcellularLocation>
        <location evidence="1">Cytoplasm</location>
    </subcellularLocation>
</comment>
<comment type="domain">
    <text evidence="1">The PRC barrel domain binds ribosomal protein uS19.</text>
</comment>
<comment type="similarity">
    <text evidence="1">Belongs to the RimM family.</text>
</comment>
<reference key="1">
    <citation type="book" date="2006" name="Gram positive pathogens, 2nd edition">
        <title>The Staphylococcus aureus NCTC 8325 genome.</title>
        <editorList>
            <person name="Fischetti V."/>
            <person name="Novick R."/>
            <person name="Ferretti J."/>
            <person name="Portnoy D."/>
            <person name="Rood J."/>
        </editorList>
        <authorList>
            <person name="Gillaspy A.F."/>
            <person name="Worrell V."/>
            <person name="Orvis J."/>
            <person name="Roe B.A."/>
            <person name="Dyer D.W."/>
            <person name="Iandolo J.J."/>
        </authorList>
    </citation>
    <scope>NUCLEOTIDE SEQUENCE [LARGE SCALE GENOMIC DNA]</scope>
    <source>
        <strain>NCTC 8325 / PS 47</strain>
    </source>
</reference>
<accession>Q2FZ44</accession>
<proteinExistence type="inferred from homology"/>
<sequence length="167" mass="19042">MRVEVGQIVNTHGIKGEIKVKSNSDFTDVRFQPGQVLTVVHNNNDLEYTVKSHRVHKGLHMLTFEGINNINDIEHLKGSSIYQERDHEDIVLEENEFYYSDIIGCAVFDDQKTPIGRVINIFETGANDVWVIKGSKEYLIPYIADVVKEVDVENKKIIITPMEGLLD</sequence>
<feature type="chain" id="PRO_1000001233" description="Ribosome maturation factor RimM">
    <location>
        <begin position="1"/>
        <end position="167"/>
    </location>
</feature>
<feature type="domain" description="PRC barrel" evidence="1">
    <location>
        <begin position="94"/>
        <end position="165"/>
    </location>
</feature>
<name>RIMM_STAA8</name>
<protein>
    <recommendedName>
        <fullName evidence="1">Ribosome maturation factor RimM</fullName>
    </recommendedName>
</protein>
<evidence type="ECO:0000255" key="1">
    <source>
        <dbReference type="HAMAP-Rule" id="MF_00014"/>
    </source>
</evidence>
<organism>
    <name type="scientific">Staphylococcus aureus (strain NCTC 8325 / PS 47)</name>
    <dbReference type="NCBI Taxonomy" id="93061"/>
    <lineage>
        <taxon>Bacteria</taxon>
        <taxon>Bacillati</taxon>
        <taxon>Bacillota</taxon>
        <taxon>Bacilli</taxon>
        <taxon>Bacillales</taxon>
        <taxon>Staphylococcaceae</taxon>
        <taxon>Staphylococcus</taxon>
    </lineage>
</organism>
<keyword id="KW-0143">Chaperone</keyword>
<keyword id="KW-0963">Cytoplasm</keyword>
<keyword id="KW-1185">Reference proteome</keyword>
<keyword id="KW-0690">Ribosome biogenesis</keyword>
<keyword id="KW-0698">rRNA processing</keyword>
<dbReference type="EMBL" id="CP000253">
    <property type="protein sequence ID" value="ABD30314.1"/>
    <property type="molecule type" value="Genomic_DNA"/>
</dbReference>
<dbReference type="RefSeq" id="WP_001261980.1">
    <property type="nucleotide sequence ID" value="NC_007795.1"/>
</dbReference>
<dbReference type="RefSeq" id="YP_499746.1">
    <property type="nucleotide sequence ID" value="NC_007795.1"/>
</dbReference>
<dbReference type="SMR" id="Q2FZ44"/>
<dbReference type="STRING" id="93061.SAOUHSC_01209"/>
<dbReference type="PaxDb" id="1280-SAXN108_1240"/>
<dbReference type="GeneID" id="3919475"/>
<dbReference type="KEGG" id="sao:SAOUHSC_01209"/>
<dbReference type="PATRIC" id="fig|93061.5.peg.1109"/>
<dbReference type="eggNOG" id="COG0806">
    <property type="taxonomic scope" value="Bacteria"/>
</dbReference>
<dbReference type="HOGENOM" id="CLU_077636_3_1_9"/>
<dbReference type="OrthoDB" id="9810331at2"/>
<dbReference type="Proteomes" id="UP000008816">
    <property type="component" value="Chromosome"/>
</dbReference>
<dbReference type="GO" id="GO:0005829">
    <property type="term" value="C:cytosol"/>
    <property type="evidence" value="ECO:0000318"/>
    <property type="project" value="GO_Central"/>
</dbReference>
<dbReference type="GO" id="GO:0005840">
    <property type="term" value="C:ribosome"/>
    <property type="evidence" value="ECO:0007669"/>
    <property type="project" value="InterPro"/>
</dbReference>
<dbReference type="GO" id="GO:0043022">
    <property type="term" value="F:ribosome binding"/>
    <property type="evidence" value="ECO:0007669"/>
    <property type="project" value="InterPro"/>
</dbReference>
<dbReference type="GO" id="GO:0030490">
    <property type="term" value="P:maturation of SSU-rRNA"/>
    <property type="evidence" value="ECO:0000318"/>
    <property type="project" value="GO_Central"/>
</dbReference>
<dbReference type="Gene3D" id="2.30.30.240">
    <property type="entry name" value="PRC-barrel domain"/>
    <property type="match status" value="1"/>
</dbReference>
<dbReference type="Gene3D" id="2.40.30.60">
    <property type="entry name" value="RimM"/>
    <property type="match status" value="1"/>
</dbReference>
<dbReference type="HAMAP" id="MF_00014">
    <property type="entry name" value="Ribosome_mat_RimM"/>
    <property type="match status" value="1"/>
</dbReference>
<dbReference type="InterPro" id="IPR011033">
    <property type="entry name" value="PRC_barrel-like_sf"/>
</dbReference>
<dbReference type="InterPro" id="IPR056792">
    <property type="entry name" value="PRC_RimM"/>
</dbReference>
<dbReference type="InterPro" id="IPR011961">
    <property type="entry name" value="RimM"/>
</dbReference>
<dbReference type="InterPro" id="IPR002676">
    <property type="entry name" value="RimM_N"/>
</dbReference>
<dbReference type="InterPro" id="IPR036976">
    <property type="entry name" value="RimM_N_sf"/>
</dbReference>
<dbReference type="InterPro" id="IPR009000">
    <property type="entry name" value="Transl_B-barrel_sf"/>
</dbReference>
<dbReference type="NCBIfam" id="TIGR02273">
    <property type="entry name" value="16S_RimM"/>
    <property type="match status" value="1"/>
</dbReference>
<dbReference type="PANTHER" id="PTHR33692">
    <property type="entry name" value="RIBOSOME MATURATION FACTOR RIMM"/>
    <property type="match status" value="1"/>
</dbReference>
<dbReference type="PANTHER" id="PTHR33692:SF1">
    <property type="entry name" value="RIBOSOME MATURATION FACTOR RIMM"/>
    <property type="match status" value="1"/>
</dbReference>
<dbReference type="Pfam" id="PF24986">
    <property type="entry name" value="PRC_RimM"/>
    <property type="match status" value="1"/>
</dbReference>
<dbReference type="Pfam" id="PF01782">
    <property type="entry name" value="RimM"/>
    <property type="match status" value="1"/>
</dbReference>
<dbReference type="SUPFAM" id="SSF50346">
    <property type="entry name" value="PRC-barrel domain"/>
    <property type="match status" value="1"/>
</dbReference>
<dbReference type="SUPFAM" id="SSF50447">
    <property type="entry name" value="Translation proteins"/>
    <property type="match status" value="1"/>
</dbReference>